<sequence length="788" mass="84922">MSQPGPKPAASPRPSRGAAARHTQEHVNEKNIGSSSKPGEKKGSDEKKAASLGSSQPSRPHVGEAATATKVTASSAATSKSPSMSTTETKAIPVNKQLEGPDQKRPREQAVKTESKKPQSSEQPVVHEKKSKGGPKEGSEPKNLPKHTSSTGSKHAHKEKALSRSNEQMVSEKPSESKTKFQDVPSAGGESVAGGGTVATALDKVVGKKKEQKPFTPASPVQSTPSKPSDKSGMDAALDDLIDTLGGHEDTNRDDPPYTGPVVLDPMYSTYLEALGIKEGTIPPEYRKLLEKNEGITQPLPDSPKPMGTDQAIDALSSDFTCSSPTGKQSEKEKSTGEIFKAQSAGVTRSSVPPKEKKRKVEEEVINDQALQALSDSLGTRQPDPPSHVSQAEQVKEAKAKEERQEKCGEDEDTVPAEYRLKPAKDKDGKPLLPEPEETSKSLSESELIGELSADFDRSTYQDKPSTPAEKKSNDTSQTPPGETVPRASMCSIRSAPPKLASLKGVVPEDAVETLAGSLGTREADPEHEKTVEDKVKEKAKEEEHEKLGEKEETVPPDYRLEEVKDKDGKPLLPKESQEQLAPLSDDFLLDALSQDFSSPANISSLEFEDAKLSAAISEVVSQTPAPSTHAAAPLPGTEQKDKELDDALDELSDSLGQRPPDPDENKPLDDKVKEKIKPEHSEKLGERDDTIPPEYRHLLDNDGKDKPEKPPTKKTEKPDQDRDPIDALSEDLDSCPSTTETSKNTAKGKSKKTSSSKASKDGEKTKDSSKKTEEVSKPKAKEDARHS</sequence>
<comment type="function">
    <text>Specific inhibition of calpain (calcium-dependent cysteine protease). Plays a key role in postmortem tenderization of meat and have been proposed to be involved in muscle protein degradation in living tissue.</text>
</comment>
<comment type="alternative products">
    <event type="alternative splicing"/>
    <isoform>
        <id>P51125-1</id>
        <name>1</name>
        <name>MCS-A</name>
        <sequence type="displayed"/>
    </isoform>
    <isoform>
        <id>P51125-2</id>
        <name>2</name>
        <name>MCS-B</name>
        <sequence type="described" ref="VSP_000751"/>
    </isoform>
    <isoform>
        <id>P51125-3</id>
        <name>3</name>
        <name>MCS-C</name>
        <sequence type="described" ref="VSP_000751 VSP_000752"/>
    </isoform>
    <isoform>
        <id>P51125-4</id>
        <name>4</name>
        <name>TCAST1</name>
        <sequence type="described" ref="VSP_000747 VSP_000748"/>
    </isoform>
    <isoform>
        <id>P51125-5</id>
        <name>5</name>
        <name>TCAST2</name>
        <sequence type="described" ref="VSP_000749 VSP_000750"/>
    </isoform>
    <isoform>
        <id>P51125-6</id>
        <name>6</name>
        <sequence type="described" ref="VSP_000745"/>
    </isoform>
    <isoform>
        <id>P51125-7</id>
        <name>7</name>
        <sequence type="described" ref="VSP_000746"/>
    </isoform>
</comment>
<comment type="tissue specificity">
    <text evidence="5 6">Isoform 2 is the major form in all tissues examined. Isoform 1 accounts for 5-10% in tissues such as skeletal muscle, liver and brain, and 30% in myoblasts. Isoforms 4 and 5 are testis-specific. Isoform 6 is highly expressed in heart and skeletal muscle with lower levels in liver, brain and testis. Isoform 7 is expressed at high levels in liver.</text>
</comment>
<comment type="domain">
    <text evidence="1">Each of the four flexible inhibitory domains can inhibit one calcium-bound calpain molecule by occupying both sides of the active site.</text>
</comment>
<comment type="similarity">
    <text evidence="8">Belongs to the protease inhibitor I27 (calpastatin) family.</text>
</comment>
<gene>
    <name type="primary">Cast</name>
</gene>
<protein>
    <recommendedName>
        <fullName>Calpastatin</fullName>
    </recommendedName>
    <alternativeName>
        <fullName>Calpain inhibitor</fullName>
    </alternativeName>
</protein>
<name>ICAL_MOUSE</name>
<reference key="1">
    <citation type="journal article" date="1999" name="Biochem. Biophys. Res. Commun.">
        <title>Structure of mouse calpastatin isoforms: implications of species-common and species-specific alternative splicing.</title>
        <authorList>
            <person name="Takano J."/>
            <person name="Kawamura T."/>
            <person name="Murase M."/>
            <person name="Hitomi K."/>
            <person name="Maki M."/>
        </authorList>
    </citation>
    <scope>NUCLEOTIDE SEQUENCE [MRNA] (ISOFORMS 1; 2 AND 3)</scope>
    <scope>TISSUE SPECIFICITY</scope>
    <source>
        <strain>C3H/HeJ</strain>
        <tissue>Muscle</tissue>
    </source>
</reference>
<reference key="2">
    <citation type="journal article" date="2000" name="J. Biochem.">
        <title>Four types of calpastatin isoforms with distinct amino-terminal sequences are specified by alternative first exons and differentially expressed in mouse tissues.</title>
        <authorList>
            <person name="Takano J."/>
            <person name="Watanabe M."/>
            <person name="Hitomi K."/>
            <person name="Maki M."/>
        </authorList>
    </citation>
    <scope>NUCLEOTIDE SEQUENCE (ISOFORMS 4; 5; 6 AND 7)</scope>
    <scope>TISSUE SPECIFICITY</scope>
</reference>
<reference key="3">
    <citation type="submission" date="1999-09" db="EMBL/GenBank/DDBJ databases">
        <title>Characterization of a membrane associated testis-specific calpastatin.</title>
        <authorList>
            <person name="Li S."/>
            <person name="Goldberg E."/>
        </authorList>
    </citation>
    <scope>NUCLEOTIDE SEQUENCE (ISOFORMS 4 AND 5)</scope>
    <source>
        <strain>CD-1</strain>
    </source>
</reference>
<reference key="4">
    <citation type="journal article" date="1992" name="Biochim. Biophys. Acta">
        <title>Multiple forms of rat calpastatin cDNA in the coding region of functionally unknown amino-terminal domain.</title>
        <authorList>
            <person name="Lee W.J."/>
            <person name="Hatanaka M."/>
            <person name="Maki M."/>
        </authorList>
    </citation>
    <scope>NUCLEOTIDE SEQUENCE OF 84-363 (ISOFORM 2)</scope>
    <source>
        <strain>BALB/cJ</strain>
        <tissue>Heart</tissue>
    </source>
</reference>
<reference key="5">
    <citation type="journal article" date="2007" name="Proc. Natl. Acad. Sci. U.S.A.">
        <title>Large-scale phosphorylation analysis of mouse liver.</title>
        <authorList>
            <person name="Villen J."/>
            <person name="Beausoleil S.A."/>
            <person name="Gerber S.A."/>
            <person name="Gygi S.P."/>
        </authorList>
    </citation>
    <scope>PHOSPHORYLATION [LARGE SCALE ANALYSIS] AT THR-479</scope>
    <scope>IDENTIFICATION BY MASS SPECTROMETRY [LARGE SCALE ANALYSIS]</scope>
    <source>
        <tissue>Liver</tissue>
    </source>
</reference>
<reference key="6">
    <citation type="journal article" date="2009" name="Immunity">
        <title>The phagosomal proteome in interferon-gamma-activated macrophages.</title>
        <authorList>
            <person name="Trost M."/>
            <person name="English L."/>
            <person name="Lemieux S."/>
            <person name="Courcelles M."/>
            <person name="Desjardins M."/>
            <person name="Thibault P."/>
        </authorList>
    </citation>
    <scope>PHOSPHORYLATION [LARGE SCALE ANALYSIS] AT SER-219</scope>
    <scope>IDENTIFICATION BY MASS SPECTROMETRY [LARGE SCALE ANALYSIS]</scope>
</reference>
<reference key="7">
    <citation type="journal article" date="2009" name="Mol. Cell. Proteomics">
        <title>Large scale localization of protein phosphorylation by use of electron capture dissociation mass spectrometry.</title>
        <authorList>
            <person name="Sweet S.M."/>
            <person name="Bailey C.M."/>
            <person name="Cunningham D.L."/>
            <person name="Heath J.K."/>
            <person name="Cooper H.J."/>
        </authorList>
    </citation>
    <scope>PHOSPHORYLATION [LARGE SCALE ANALYSIS] AT SER-11 AND THR-479</scope>
    <scope>IDENTIFICATION BY MASS SPECTROMETRY [LARGE SCALE ANALYSIS]</scope>
    <source>
        <tissue>Embryonic fibroblast</tissue>
    </source>
</reference>
<reference key="8">
    <citation type="journal article" date="2010" name="Cell">
        <title>A tissue-specific atlas of mouse protein phosphorylation and expression.</title>
        <authorList>
            <person name="Huttlin E.L."/>
            <person name="Jedrychowski M.P."/>
            <person name="Elias J.E."/>
            <person name="Goswami T."/>
            <person name="Rad R."/>
            <person name="Beausoleil S.A."/>
            <person name="Villen J."/>
            <person name="Haas W."/>
            <person name="Sowa M.E."/>
            <person name="Gygi S.P."/>
        </authorList>
    </citation>
    <scope>PHOSPHORYLATION [LARGE SCALE ANALYSIS] AT SER-165; SER-219; SER-303 AND THR-479</scope>
    <scope>IDENTIFICATION BY MASS SPECTROMETRY [LARGE SCALE ANALYSIS]</scope>
    <source>
        <tissue>Brown adipose tissue</tissue>
        <tissue>Heart</tissue>
        <tissue>Kidney</tissue>
        <tissue>Liver</tissue>
        <tissue>Lung</tissue>
        <tissue>Pancreas</tissue>
        <tissue>Spleen</tissue>
        <tissue>Testis</tissue>
    </source>
</reference>
<reference key="9">
    <citation type="journal article" date="2013" name="Mol. Cell">
        <title>SIRT5-mediated lysine desuccinylation impacts diverse metabolic pathways.</title>
        <authorList>
            <person name="Park J."/>
            <person name="Chen Y."/>
            <person name="Tishkoff D.X."/>
            <person name="Peng C."/>
            <person name="Tan M."/>
            <person name="Dai L."/>
            <person name="Xie Z."/>
            <person name="Zhang Y."/>
            <person name="Zwaans B.M."/>
            <person name="Skinner M.E."/>
            <person name="Lombard D.B."/>
            <person name="Zhao Y."/>
        </authorList>
    </citation>
    <scope>ACETYLATION [LARGE SCALE ANALYSIS] AT LYS-129</scope>
    <scope>IDENTIFICATION BY MASS SPECTROMETRY [LARGE SCALE ANALYSIS]</scope>
    <source>
        <tissue>Embryonic fibroblast</tissue>
    </source>
</reference>
<proteinExistence type="evidence at protein level"/>
<accession>P51125</accession>
<accession>Q9EQV4</accession>
<accession>Q9EQV5</accession>
<accession>Q9QXQ3</accession>
<accession>Q9QXQ4</accession>
<accession>Q9R0N1</accession>
<dbReference type="EMBL" id="AB026997">
    <property type="protein sequence ID" value="BAA84768.1"/>
    <property type="molecule type" value="mRNA"/>
</dbReference>
<dbReference type="EMBL" id="AF190152">
    <property type="protein sequence ID" value="AAF25194.1"/>
    <property type="molecule type" value="mRNA"/>
</dbReference>
<dbReference type="EMBL" id="AF190151">
    <property type="protein sequence ID" value="AAF25193.1"/>
    <property type="molecule type" value="mRNA"/>
</dbReference>
<dbReference type="EMBL" id="AB044334">
    <property type="protein sequence ID" value="BAB18888.1"/>
    <property type="molecule type" value="Genomic_DNA"/>
</dbReference>
<dbReference type="EMBL" id="AB044334">
    <property type="protein sequence ID" value="BAB18889.1"/>
    <property type="molecule type" value="Genomic_DNA"/>
</dbReference>
<dbReference type="EMBL" id="AB044334">
    <property type="protein sequence ID" value="BAB18886.1"/>
    <property type="molecule type" value="Genomic_DNA"/>
</dbReference>
<dbReference type="EMBL" id="AB044334">
    <property type="protein sequence ID" value="BAB18887.1"/>
    <property type="molecule type" value="Genomic_DNA"/>
</dbReference>
<dbReference type="EMBL" id="X62519">
    <property type="protein sequence ID" value="CAA44385.1"/>
    <property type="molecule type" value="mRNA"/>
</dbReference>
<dbReference type="CCDS" id="CCDS88487.1">
    <molecule id="P51125-5"/>
</dbReference>
<dbReference type="CCDS" id="CCDS88491.1">
    <molecule id="P51125-1"/>
</dbReference>
<dbReference type="PIR" id="S20610">
    <property type="entry name" value="S20610"/>
</dbReference>
<dbReference type="RefSeq" id="NP_001288082.1">
    <molecule id="P51125-1"/>
    <property type="nucleotide sequence ID" value="NM_001301153.1"/>
</dbReference>
<dbReference type="RefSeq" id="NP_001288089.1">
    <molecule id="P51125-5"/>
    <property type="nucleotide sequence ID" value="NM_001301160.1"/>
</dbReference>
<dbReference type="RefSeq" id="NP_001288110.1">
    <molecule id="P51125-4"/>
    <property type="nucleotide sequence ID" value="NM_001301181.1"/>
</dbReference>
<dbReference type="RefSeq" id="XP_006517122.1">
    <molecule id="P51125-2"/>
    <property type="nucleotide sequence ID" value="XM_006517059.1"/>
</dbReference>
<dbReference type="RefSeq" id="XP_011242768.1">
    <molecule id="P51125-6"/>
    <property type="nucleotide sequence ID" value="XM_011244466.4"/>
</dbReference>
<dbReference type="RefSeq" id="XP_011242769.1">
    <molecule id="P51125-7"/>
    <property type="nucleotide sequence ID" value="XM_011244467.4"/>
</dbReference>
<dbReference type="SMR" id="P51125"/>
<dbReference type="BioGRID" id="198509">
    <property type="interactions" value="14"/>
</dbReference>
<dbReference type="FunCoup" id="P51125">
    <property type="interactions" value="1734"/>
</dbReference>
<dbReference type="IntAct" id="P51125">
    <property type="interactions" value="1"/>
</dbReference>
<dbReference type="MINT" id="P51125"/>
<dbReference type="STRING" id="10090.ENSMUSP00000065275"/>
<dbReference type="MEROPS" id="I27.001"/>
<dbReference type="MEROPS" id="I27.002"/>
<dbReference type="MEROPS" id="I27.003"/>
<dbReference type="MEROPS" id="I27.004"/>
<dbReference type="GlyGen" id="P51125">
    <property type="glycosylation" value="2 sites, 1 O-linked glycan (1 site)"/>
</dbReference>
<dbReference type="iPTMnet" id="P51125"/>
<dbReference type="PhosphoSitePlus" id="P51125"/>
<dbReference type="SwissPalm" id="P51125"/>
<dbReference type="CPTAC" id="non-CPTAC-3825"/>
<dbReference type="jPOST" id="P51125"/>
<dbReference type="PaxDb" id="10090-ENSMUSP00000065275"/>
<dbReference type="PeptideAtlas" id="P51125"/>
<dbReference type="ProteomicsDB" id="273251">
    <molecule id="P51125-1"/>
</dbReference>
<dbReference type="ProteomicsDB" id="273252">
    <molecule id="P51125-2"/>
</dbReference>
<dbReference type="ProteomicsDB" id="273253">
    <molecule id="P51125-3"/>
</dbReference>
<dbReference type="ProteomicsDB" id="273254">
    <molecule id="P51125-4"/>
</dbReference>
<dbReference type="ProteomicsDB" id="273255">
    <molecule id="P51125-5"/>
</dbReference>
<dbReference type="ProteomicsDB" id="273256">
    <molecule id="P51125-6"/>
</dbReference>
<dbReference type="ProteomicsDB" id="273257">
    <molecule id="P51125-7"/>
</dbReference>
<dbReference type="Pumba" id="P51125"/>
<dbReference type="Antibodypedia" id="4008">
    <property type="antibodies" value="429 antibodies from 33 providers"/>
</dbReference>
<dbReference type="DNASU" id="12380"/>
<dbReference type="Ensembl" id="ENSMUST00000223206.2">
    <molecule id="P51125-1"/>
    <property type="protein sequence ID" value="ENSMUSP00000152174.2"/>
    <property type="gene ID" value="ENSMUSG00000021585.11"/>
</dbReference>
<dbReference type="Ensembl" id="ENSMUST00000223309.2">
    <molecule id="P51125-5"/>
    <property type="protein sequence ID" value="ENSMUSP00000152657.2"/>
    <property type="gene ID" value="ENSMUSG00000021585.11"/>
</dbReference>
<dbReference type="GeneID" id="12380"/>
<dbReference type="KEGG" id="mmu:12380"/>
<dbReference type="UCSC" id="uc007rfl.2">
    <molecule id="P51125-4"/>
    <property type="organism name" value="mouse"/>
</dbReference>
<dbReference type="UCSC" id="uc007rfq.2">
    <molecule id="P51125-1"/>
    <property type="organism name" value="mouse"/>
</dbReference>
<dbReference type="AGR" id="MGI:1098236"/>
<dbReference type="CTD" id="831"/>
<dbReference type="MGI" id="MGI:1098236">
    <property type="gene designation" value="Cast"/>
</dbReference>
<dbReference type="VEuPathDB" id="HostDB:ENSMUSG00000021585"/>
<dbReference type="eggNOG" id="ENOG502RHIZ">
    <property type="taxonomic scope" value="Eukaryota"/>
</dbReference>
<dbReference type="GeneTree" id="ENSGT00390000002993"/>
<dbReference type="InParanoid" id="P51125"/>
<dbReference type="OMA" id="MCTIQSA"/>
<dbReference type="OrthoDB" id="8926414at2759"/>
<dbReference type="PhylomeDB" id="P51125"/>
<dbReference type="Reactome" id="R-MMU-1474228">
    <property type="pathway name" value="Degradation of the extracellular matrix"/>
</dbReference>
<dbReference type="BioGRID-ORCS" id="12380">
    <property type="hits" value="0 hits in 78 CRISPR screens"/>
</dbReference>
<dbReference type="ChiTaRS" id="Cast">
    <property type="organism name" value="mouse"/>
</dbReference>
<dbReference type="PRO" id="PR:P51125"/>
<dbReference type="Proteomes" id="UP000000589">
    <property type="component" value="Chromosome 13"/>
</dbReference>
<dbReference type="RNAct" id="P51125">
    <property type="molecule type" value="protein"/>
</dbReference>
<dbReference type="Bgee" id="ENSMUSG00000021585">
    <property type="expression patterns" value="Expressed in spermatid and 232 other cell types or tissues"/>
</dbReference>
<dbReference type="ExpressionAtlas" id="P51125">
    <property type="expression patterns" value="baseline and differential"/>
</dbReference>
<dbReference type="GO" id="GO:0016020">
    <property type="term" value="C:membrane"/>
    <property type="evidence" value="ECO:0000314"/>
    <property type="project" value="MGI"/>
</dbReference>
<dbReference type="GO" id="GO:0004869">
    <property type="term" value="F:cysteine-type endopeptidase inhibitor activity"/>
    <property type="evidence" value="ECO:0007669"/>
    <property type="project" value="UniProtKB-KW"/>
</dbReference>
<dbReference type="GO" id="GO:0030163">
    <property type="term" value="P:protein catabolic process"/>
    <property type="evidence" value="ECO:0000247"/>
    <property type="project" value="MGI"/>
</dbReference>
<dbReference type="InterPro" id="IPR026998">
    <property type="entry name" value="Calpastatin"/>
</dbReference>
<dbReference type="InterPro" id="IPR001259">
    <property type="entry name" value="Prot_inh_calpain"/>
</dbReference>
<dbReference type="PANTHER" id="PTHR10077">
    <property type="entry name" value="CALPASTATIN"/>
    <property type="match status" value="1"/>
</dbReference>
<dbReference type="PANTHER" id="PTHR10077:SF0">
    <property type="entry name" value="CALPASTATIN"/>
    <property type="match status" value="1"/>
</dbReference>
<dbReference type="Pfam" id="PF00748">
    <property type="entry name" value="Calpain_inhib"/>
    <property type="match status" value="3"/>
</dbReference>
<keyword id="KW-0007">Acetylation</keyword>
<keyword id="KW-0025">Alternative splicing</keyword>
<keyword id="KW-1017">Isopeptide bond</keyword>
<keyword id="KW-0597">Phosphoprotein</keyword>
<keyword id="KW-0646">Protease inhibitor</keyword>
<keyword id="KW-1185">Reference proteome</keyword>
<keyword id="KW-0677">Repeat</keyword>
<keyword id="KW-0789">Thiol protease inhibitor</keyword>
<keyword id="KW-0832">Ubl conjugation</keyword>
<organism>
    <name type="scientific">Mus musculus</name>
    <name type="common">Mouse</name>
    <dbReference type="NCBI Taxonomy" id="10090"/>
    <lineage>
        <taxon>Eukaryota</taxon>
        <taxon>Metazoa</taxon>
        <taxon>Chordata</taxon>
        <taxon>Craniata</taxon>
        <taxon>Vertebrata</taxon>
        <taxon>Euteleostomi</taxon>
        <taxon>Mammalia</taxon>
        <taxon>Eutheria</taxon>
        <taxon>Euarchontoglires</taxon>
        <taxon>Glires</taxon>
        <taxon>Rodentia</taxon>
        <taxon>Myomorpha</taxon>
        <taxon>Muroidea</taxon>
        <taxon>Muridae</taxon>
        <taxon>Murinae</taxon>
        <taxon>Mus</taxon>
        <taxon>Mus</taxon>
    </lineage>
</organism>
<evidence type="ECO:0000250" key="1"/>
<evidence type="ECO:0000250" key="2">
    <source>
        <dbReference type="UniProtKB" id="P20810"/>
    </source>
</evidence>
<evidence type="ECO:0000250" key="3">
    <source>
        <dbReference type="UniProtKB" id="P27321"/>
    </source>
</evidence>
<evidence type="ECO:0000256" key="4">
    <source>
        <dbReference type="SAM" id="MobiDB-lite"/>
    </source>
</evidence>
<evidence type="ECO:0000269" key="5">
    <source>
    </source>
</evidence>
<evidence type="ECO:0000269" key="6">
    <source>
    </source>
</evidence>
<evidence type="ECO:0000303" key="7">
    <source>
    </source>
</evidence>
<evidence type="ECO:0000305" key="8"/>
<evidence type="ECO:0007744" key="9">
    <source>
    </source>
</evidence>
<evidence type="ECO:0007744" key="10">
    <source>
    </source>
</evidence>
<evidence type="ECO:0007744" key="11">
    <source>
    </source>
</evidence>
<evidence type="ECO:0007744" key="12">
    <source>
    </source>
</evidence>
<evidence type="ECO:0007744" key="13">
    <source>
    </source>
</evidence>
<feature type="chain" id="PRO_0000147633" description="Calpastatin">
    <location>
        <begin position="1"/>
        <end position="788"/>
    </location>
</feature>
<feature type="repeat" description="Inhibitory domain 1">
    <location>
        <begin position="251"/>
        <end position="303"/>
    </location>
</feature>
<feature type="repeat" description="Inhibitory domain 2">
    <location>
        <begin position="384"/>
        <end position="436"/>
    </location>
</feature>
<feature type="repeat" description="Inhibitory domain 3">
    <location>
        <begin position="524"/>
        <end position="577"/>
    </location>
</feature>
<feature type="repeat" description="Inhibitory domain 4">
    <location>
        <begin position="661"/>
        <end position="714"/>
    </location>
</feature>
<feature type="region of interest" description="Disordered" evidence="4">
    <location>
        <begin position="1"/>
        <end position="262"/>
    </location>
</feature>
<feature type="region of interest" description="Disordered" evidence="4">
    <location>
        <begin position="289"/>
        <end position="493"/>
    </location>
</feature>
<feature type="region of interest" description="Disordered" evidence="4">
    <location>
        <begin position="514"/>
        <end position="580"/>
    </location>
</feature>
<feature type="region of interest" description="Disordered" evidence="4">
    <location>
        <begin position="620"/>
        <end position="788"/>
    </location>
</feature>
<feature type="compositionally biased region" description="Pro residues" evidence="4">
    <location>
        <begin position="1"/>
        <end position="11"/>
    </location>
</feature>
<feature type="compositionally biased region" description="Low complexity" evidence="4">
    <location>
        <begin position="12"/>
        <end position="21"/>
    </location>
</feature>
<feature type="compositionally biased region" description="Basic and acidic residues" evidence="4">
    <location>
        <begin position="38"/>
        <end position="49"/>
    </location>
</feature>
<feature type="compositionally biased region" description="Low complexity" evidence="4">
    <location>
        <begin position="65"/>
        <end position="87"/>
    </location>
</feature>
<feature type="compositionally biased region" description="Basic and acidic residues" evidence="4">
    <location>
        <begin position="99"/>
        <end position="119"/>
    </location>
</feature>
<feature type="compositionally biased region" description="Basic and acidic residues" evidence="4">
    <location>
        <begin position="246"/>
        <end position="256"/>
    </location>
</feature>
<feature type="compositionally biased region" description="Polar residues" evidence="4">
    <location>
        <begin position="318"/>
        <end position="328"/>
    </location>
</feature>
<feature type="compositionally biased region" description="Polar residues" evidence="4">
    <location>
        <begin position="369"/>
        <end position="380"/>
    </location>
</feature>
<feature type="compositionally biased region" description="Basic and acidic residues" evidence="4">
    <location>
        <begin position="394"/>
        <end position="408"/>
    </location>
</feature>
<feature type="compositionally biased region" description="Basic and acidic residues" evidence="4">
    <location>
        <begin position="419"/>
        <end position="430"/>
    </location>
</feature>
<feature type="compositionally biased region" description="Low complexity" evidence="4">
    <location>
        <begin position="441"/>
        <end position="453"/>
    </location>
</feature>
<feature type="compositionally biased region" description="Basic and acidic residues" evidence="4">
    <location>
        <begin position="522"/>
        <end position="570"/>
    </location>
</feature>
<feature type="compositionally biased region" description="Basic and acidic residues" evidence="4">
    <location>
        <begin position="661"/>
        <end position="726"/>
    </location>
</feature>
<feature type="compositionally biased region" description="Basic and acidic residues" evidence="4">
    <location>
        <begin position="759"/>
        <end position="788"/>
    </location>
</feature>
<feature type="modified residue" description="Phosphoserine" evidence="10">
    <location>
        <position position="11"/>
    </location>
</feature>
<feature type="modified residue" description="N6-acetyllysine" evidence="13">
    <location>
        <position position="129"/>
    </location>
</feature>
<feature type="modified residue" description="Phosphoserine" evidence="12">
    <location>
        <position position="165"/>
    </location>
</feature>
<feature type="modified residue" description="Phosphothreonine" evidence="3">
    <location>
        <position position="216"/>
    </location>
</feature>
<feature type="modified residue" description="Phosphoserine" evidence="11 12">
    <location>
        <position position="219"/>
    </location>
</feature>
<feature type="modified residue" description="Phosphoserine" evidence="12">
    <location>
        <position position="303"/>
    </location>
</feature>
<feature type="modified residue" description="Phosphoserine" evidence="2">
    <location>
        <position position="324"/>
    </location>
</feature>
<feature type="modified residue" description="Phosphoserine" evidence="2">
    <location>
        <position position="444"/>
    </location>
</feature>
<feature type="modified residue" description="Phosphoserine" evidence="2">
    <location>
        <position position="446"/>
    </location>
</feature>
<feature type="modified residue" description="Phosphoserine" evidence="2">
    <location>
        <position position="453"/>
    </location>
</feature>
<feature type="modified residue" description="Phosphothreonine" evidence="9 10 12">
    <location>
        <position position="479"/>
    </location>
</feature>
<feature type="modified residue" description="Phosphoserine" evidence="2">
    <location>
        <position position="518"/>
    </location>
</feature>
<feature type="modified residue" description="Phosphoserine" evidence="2">
    <location>
        <position position="594"/>
    </location>
</feature>
<feature type="modified residue" description="Phosphoserine" evidence="2">
    <location>
        <position position="605"/>
    </location>
</feature>
<feature type="modified residue" description="Phosphoserine" evidence="2">
    <location>
        <position position="653"/>
    </location>
</feature>
<feature type="modified residue" description="Phosphoserine" evidence="2">
    <location>
        <position position="655"/>
    </location>
</feature>
<feature type="cross-link" description="Glycyl lysine isopeptide (Lys-Gly) (interchain with G-Cter in SUMO2)" evidence="2">
    <location>
        <position position="112"/>
    </location>
</feature>
<feature type="splice variant" id="VSP_000749" description="In isoform 5." evidence="8">
    <location>
        <begin position="1"/>
        <end position="357"/>
    </location>
</feature>
<feature type="splice variant" id="VSP_000747" description="In isoform 4." evidence="8">
    <location>
        <begin position="1"/>
        <end position="341"/>
    </location>
</feature>
<feature type="splice variant" id="VSP_000746" description="In isoform 7." evidence="8">
    <location>
        <begin position="1"/>
        <end position="83"/>
    </location>
</feature>
<feature type="splice variant" id="VSP_000745" description="In isoform 6." evidence="8">
    <original>MSQPGPKPAASPRPSRGAAARHTQE</original>
    <variation>MAFASWWYKT</variation>
    <location>
        <begin position="1"/>
        <end position="25"/>
    </location>
</feature>
<feature type="splice variant" id="VSP_000751" description="In isoform 2 and isoform 3." evidence="7">
    <location>
        <begin position="92"/>
        <end position="110"/>
    </location>
</feature>
<feature type="splice variant" id="VSP_000752" description="In isoform 3." evidence="7">
    <location>
        <begin position="305"/>
        <end position="333"/>
    </location>
</feature>
<feature type="splice variant" id="VSP_000748" description="In isoform 4." evidence="8">
    <original>AQSAGVTRSSVPPKEKKRKVEEEVINDQALQALSDSLGTRQPDPPSHVSQAEQVK</original>
    <variation>MGQFLSSTFWEGSPAAVWQEKLREGERKGAGETIPILQDHVICSEEREHGSKHH</variation>
    <location>
        <begin position="342"/>
        <end position="396"/>
    </location>
</feature>
<feature type="splice variant" id="VSP_000750" description="In isoform 5." evidence="8">
    <original>KRKVEEEVINDQALQALSDSLGTRQPDPPSHVSQAEQVKE</original>
    <variation>MGQFLSSTFWEGSPAAVWQEKLREGERKGAGETIPILQDH</variation>
    <location>
        <begin position="358"/>
        <end position="397"/>
    </location>
</feature>